<organism>
    <name type="scientific">Shewanella pealeana (strain ATCC 700345 / ANG-SQ1)</name>
    <dbReference type="NCBI Taxonomy" id="398579"/>
    <lineage>
        <taxon>Bacteria</taxon>
        <taxon>Pseudomonadati</taxon>
        <taxon>Pseudomonadota</taxon>
        <taxon>Gammaproteobacteria</taxon>
        <taxon>Alteromonadales</taxon>
        <taxon>Shewanellaceae</taxon>
        <taxon>Shewanella</taxon>
    </lineage>
</organism>
<proteinExistence type="inferred from homology"/>
<evidence type="ECO:0000255" key="1">
    <source>
        <dbReference type="HAMAP-Rule" id="MF_00791"/>
    </source>
</evidence>
<gene>
    <name evidence="1" type="primary">apaG</name>
    <name type="ordered locus">Spea_0861</name>
</gene>
<keyword id="KW-1185">Reference proteome</keyword>
<protein>
    <recommendedName>
        <fullName evidence="1">Protein ApaG</fullName>
    </recommendedName>
</protein>
<dbReference type="EMBL" id="CP000851">
    <property type="protein sequence ID" value="ABV86188.1"/>
    <property type="molecule type" value="Genomic_DNA"/>
</dbReference>
<dbReference type="RefSeq" id="WP_012154122.1">
    <property type="nucleotide sequence ID" value="NC_009901.1"/>
</dbReference>
<dbReference type="SMR" id="A8H0V1"/>
<dbReference type="STRING" id="398579.Spea_0861"/>
<dbReference type="KEGG" id="spl:Spea_0861"/>
<dbReference type="eggNOG" id="COG2967">
    <property type="taxonomic scope" value="Bacteria"/>
</dbReference>
<dbReference type="HOGENOM" id="CLU_128074_0_0_6"/>
<dbReference type="OrthoDB" id="9795226at2"/>
<dbReference type="Proteomes" id="UP000002608">
    <property type="component" value="Chromosome"/>
</dbReference>
<dbReference type="Gene3D" id="2.60.40.1470">
    <property type="entry name" value="ApaG domain"/>
    <property type="match status" value="1"/>
</dbReference>
<dbReference type="HAMAP" id="MF_00791">
    <property type="entry name" value="ApaG"/>
    <property type="match status" value="1"/>
</dbReference>
<dbReference type="InterPro" id="IPR050718">
    <property type="entry name" value="ApaG-like"/>
</dbReference>
<dbReference type="InterPro" id="IPR007474">
    <property type="entry name" value="ApaG_domain"/>
</dbReference>
<dbReference type="InterPro" id="IPR036767">
    <property type="entry name" value="ApaG_sf"/>
</dbReference>
<dbReference type="InterPro" id="IPR023065">
    <property type="entry name" value="Uncharacterised_ApaG"/>
</dbReference>
<dbReference type="NCBIfam" id="NF003967">
    <property type="entry name" value="PRK05461.1"/>
    <property type="match status" value="1"/>
</dbReference>
<dbReference type="PANTHER" id="PTHR47191">
    <property type="entry name" value="OS05G0170800 PROTEIN"/>
    <property type="match status" value="1"/>
</dbReference>
<dbReference type="PANTHER" id="PTHR47191:SF2">
    <property type="entry name" value="OS05G0170800 PROTEIN"/>
    <property type="match status" value="1"/>
</dbReference>
<dbReference type="Pfam" id="PF04379">
    <property type="entry name" value="DUF525"/>
    <property type="match status" value="1"/>
</dbReference>
<dbReference type="SUPFAM" id="SSF110069">
    <property type="entry name" value="ApaG-like"/>
    <property type="match status" value="1"/>
</dbReference>
<dbReference type="PROSITE" id="PS51087">
    <property type="entry name" value="APAG"/>
    <property type="match status" value="1"/>
</dbReference>
<accession>A8H0V1</accession>
<reference key="1">
    <citation type="submission" date="2007-10" db="EMBL/GenBank/DDBJ databases">
        <title>Complete sequence of Shewanella pealeana ATCC 700345.</title>
        <authorList>
            <consortium name="US DOE Joint Genome Institute"/>
            <person name="Copeland A."/>
            <person name="Lucas S."/>
            <person name="Lapidus A."/>
            <person name="Barry K."/>
            <person name="Glavina del Rio T."/>
            <person name="Dalin E."/>
            <person name="Tice H."/>
            <person name="Pitluck S."/>
            <person name="Chertkov O."/>
            <person name="Brettin T."/>
            <person name="Bruce D."/>
            <person name="Detter J.C."/>
            <person name="Han C."/>
            <person name="Schmutz J."/>
            <person name="Larimer F."/>
            <person name="Land M."/>
            <person name="Hauser L."/>
            <person name="Kyrpides N."/>
            <person name="Kim E."/>
            <person name="Zhao J.-S.Z."/>
            <person name="Manno D."/>
            <person name="Hawari J."/>
            <person name="Richardson P."/>
        </authorList>
    </citation>
    <scope>NUCLEOTIDE SEQUENCE [LARGE SCALE GENOMIC DNA]</scope>
    <source>
        <strain>ATCC 700345 / ANG-SQ1</strain>
    </source>
</reference>
<sequence length="126" mass="13683">MNQLAASVSVDVQTAYIETQSSPDEDKYLFSYTITISNLSNEAITLKSRHWCITDADGRKSEVHGTGVVGETPTIKPNSSYEYTSGTVLETPLGVMEGSYTMVDSDGNEFEAPISAFRLSIPGLLH</sequence>
<name>APAG_SHEPA</name>
<feature type="chain" id="PRO_1000083652" description="Protein ApaG">
    <location>
        <begin position="1"/>
        <end position="126"/>
    </location>
</feature>
<feature type="domain" description="ApaG" evidence="1">
    <location>
        <begin position="2"/>
        <end position="126"/>
    </location>
</feature>